<proteinExistence type="evidence at protein level"/>
<reference key="1">
    <citation type="journal article" date="2004" name="Nat. Genet.">
        <title>Complete sequencing and characterization of 21,243 full-length human cDNAs.</title>
        <authorList>
            <person name="Ota T."/>
            <person name="Suzuki Y."/>
            <person name="Nishikawa T."/>
            <person name="Otsuki T."/>
            <person name="Sugiyama T."/>
            <person name="Irie R."/>
            <person name="Wakamatsu A."/>
            <person name="Hayashi K."/>
            <person name="Sato H."/>
            <person name="Nagai K."/>
            <person name="Kimura K."/>
            <person name="Makita H."/>
            <person name="Sekine M."/>
            <person name="Obayashi M."/>
            <person name="Nishi T."/>
            <person name="Shibahara T."/>
            <person name="Tanaka T."/>
            <person name="Ishii S."/>
            <person name="Yamamoto J."/>
            <person name="Saito K."/>
            <person name="Kawai Y."/>
            <person name="Isono Y."/>
            <person name="Nakamura Y."/>
            <person name="Nagahari K."/>
            <person name="Murakami K."/>
            <person name="Yasuda T."/>
            <person name="Iwayanagi T."/>
            <person name="Wagatsuma M."/>
            <person name="Shiratori A."/>
            <person name="Sudo H."/>
            <person name="Hosoiri T."/>
            <person name="Kaku Y."/>
            <person name="Kodaira H."/>
            <person name="Kondo H."/>
            <person name="Sugawara M."/>
            <person name="Takahashi M."/>
            <person name="Kanda K."/>
            <person name="Yokoi T."/>
            <person name="Furuya T."/>
            <person name="Kikkawa E."/>
            <person name="Omura Y."/>
            <person name="Abe K."/>
            <person name="Kamihara K."/>
            <person name="Katsuta N."/>
            <person name="Sato K."/>
            <person name="Tanikawa M."/>
            <person name="Yamazaki M."/>
            <person name="Ninomiya K."/>
            <person name="Ishibashi T."/>
            <person name="Yamashita H."/>
            <person name="Murakawa K."/>
            <person name="Fujimori K."/>
            <person name="Tanai H."/>
            <person name="Kimata M."/>
            <person name="Watanabe M."/>
            <person name="Hiraoka S."/>
            <person name="Chiba Y."/>
            <person name="Ishida S."/>
            <person name="Ono Y."/>
            <person name="Takiguchi S."/>
            <person name="Watanabe S."/>
            <person name="Yosida M."/>
            <person name="Hotuta T."/>
            <person name="Kusano J."/>
            <person name="Kanehori K."/>
            <person name="Takahashi-Fujii A."/>
            <person name="Hara H."/>
            <person name="Tanase T.-O."/>
            <person name="Nomura Y."/>
            <person name="Togiya S."/>
            <person name="Komai F."/>
            <person name="Hara R."/>
            <person name="Takeuchi K."/>
            <person name="Arita M."/>
            <person name="Imose N."/>
            <person name="Musashino K."/>
            <person name="Yuuki H."/>
            <person name="Oshima A."/>
            <person name="Sasaki N."/>
            <person name="Aotsuka S."/>
            <person name="Yoshikawa Y."/>
            <person name="Matsunawa H."/>
            <person name="Ichihara T."/>
            <person name="Shiohata N."/>
            <person name="Sano S."/>
            <person name="Moriya S."/>
            <person name="Momiyama H."/>
            <person name="Satoh N."/>
            <person name="Takami S."/>
            <person name="Terashima Y."/>
            <person name="Suzuki O."/>
            <person name="Nakagawa S."/>
            <person name="Senoh A."/>
            <person name="Mizoguchi H."/>
            <person name="Goto Y."/>
            <person name="Shimizu F."/>
            <person name="Wakebe H."/>
            <person name="Hishigaki H."/>
            <person name="Watanabe T."/>
            <person name="Sugiyama A."/>
            <person name="Takemoto M."/>
            <person name="Kawakami B."/>
            <person name="Yamazaki M."/>
            <person name="Watanabe K."/>
            <person name="Kumagai A."/>
            <person name="Itakura S."/>
            <person name="Fukuzumi Y."/>
            <person name="Fujimori Y."/>
            <person name="Komiyama M."/>
            <person name="Tashiro H."/>
            <person name="Tanigami A."/>
            <person name="Fujiwara T."/>
            <person name="Ono T."/>
            <person name="Yamada K."/>
            <person name="Fujii Y."/>
            <person name="Ozaki K."/>
            <person name="Hirao M."/>
            <person name="Ohmori Y."/>
            <person name="Kawabata A."/>
            <person name="Hikiji T."/>
            <person name="Kobatake N."/>
            <person name="Inagaki H."/>
            <person name="Ikema Y."/>
            <person name="Okamoto S."/>
            <person name="Okitani R."/>
            <person name="Kawakami T."/>
            <person name="Noguchi S."/>
            <person name="Itoh T."/>
            <person name="Shigeta K."/>
            <person name="Senba T."/>
            <person name="Matsumura K."/>
            <person name="Nakajima Y."/>
            <person name="Mizuno T."/>
            <person name="Morinaga M."/>
            <person name="Sasaki M."/>
            <person name="Togashi T."/>
            <person name="Oyama M."/>
            <person name="Hata H."/>
            <person name="Watanabe M."/>
            <person name="Komatsu T."/>
            <person name="Mizushima-Sugano J."/>
            <person name="Satoh T."/>
            <person name="Shirai Y."/>
            <person name="Takahashi Y."/>
            <person name="Nakagawa K."/>
            <person name="Okumura K."/>
            <person name="Nagase T."/>
            <person name="Nomura N."/>
            <person name="Kikuchi H."/>
            <person name="Masuho Y."/>
            <person name="Yamashita R."/>
            <person name="Nakai K."/>
            <person name="Yada T."/>
            <person name="Nakamura Y."/>
            <person name="Ohara O."/>
            <person name="Isogai T."/>
            <person name="Sugano S."/>
        </authorList>
    </citation>
    <scope>NUCLEOTIDE SEQUENCE [LARGE SCALE MRNA]</scope>
    <scope>VARIANTS LYS-29 AND ALA-88</scope>
    <source>
        <tissue>Fetal brain</tissue>
        <tissue>Teratocarcinoma</tissue>
    </source>
</reference>
<reference key="2">
    <citation type="journal article" date="2004" name="Nature">
        <title>The DNA sequence and biology of human chromosome 19.</title>
        <authorList>
            <person name="Grimwood J."/>
            <person name="Gordon L.A."/>
            <person name="Olsen A.S."/>
            <person name="Terry A."/>
            <person name="Schmutz J."/>
            <person name="Lamerdin J.E."/>
            <person name="Hellsten U."/>
            <person name="Goodstein D."/>
            <person name="Couronne O."/>
            <person name="Tran-Gyamfi M."/>
            <person name="Aerts A."/>
            <person name="Altherr M."/>
            <person name="Ashworth L."/>
            <person name="Bajorek E."/>
            <person name="Black S."/>
            <person name="Branscomb E."/>
            <person name="Caenepeel S."/>
            <person name="Carrano A.V."/>
            <person name="Caoile C."/>
            <person name="Chan Y.M."/>
            <person name="Christensen M."/>
            <person name="Cleland C.A."/>
            <person name="Copeland A."/>
            <person name="Dalin E."/>
            <person name="Dehal P."/>
            <person name="Denys M."/>
            <person name="Detter J.C."/>
            <person name="Escobar J."/>
            <person name="Flowers D."/>
            <person name="Fotopulos D."/>
            <person name="Garcia C."/>
            <person name="Georgescu A.M."/>
            <person name="Glavina T."/>
            <person name="Gomez M."/>
            <person name="Gonzales E."/>
            <person name="Groza M."/>
            <person name="Hammon N."/>
            <person name="Hawkins T."/>
            <person name="Haydu L."/>
            <person name="Ho I."/>
            <person name="Huang W."/>
            <person name="Israni S."/>
            <person name="Jett J."/>
            <person name="Kadner K."/>
            <person name="Kimball H."/>
            <person name="Kobayashi A."/>
            <person name="Larionov V."/>
            <person name="Leem S.-H."/>
            <person name="Lopez F."/>
            <person name="Lou Y."/>
            <person name="Lowry S."/>
            <person name="Malfatti S."/>
            <person name="Martinez D."/>
            <person name="McCready P.M."/>
            <person name="Medina C."/>
            <person name="Morgan J."/>
            <person name="Nelson K."/>
            <person name="Nolan M."/>
            <person name="Ovcharenko I."/>
            <person name="Pitluck S."/>
            <person name="Pollard M."/>
            <person name="Popkie A.P."/>
            <person name="Predki P."/>
            <person name="Quan G."/>
            <person name="Ramirez L."/>
            <person name="Rash S."/>
            <person name="Retterer J."/>
            <person name="Rodriguez A."/>
            <person name="Rogers S."/>
            <person name="Salamov A."/>
            <person name="Salazar A."/>
            <person name="She X."/>
            <person name="Smith D."/>
            <person name="Slezak T."/>
            <person name="Solovyev V."/>
            <person name="Thayer N."/>
            <person name="Tice H."/>
            <person name="Tsai M."/>
            <person name="Ustaszewska A."/>
            <person name="Vo N."/>
            <person name="Wagner M."/>
            <person name="Wheeler J."/>
            <person name="Wu K."/>
            <person name="Xie G."/>
            <person name="Yang J."/>
            <person name="Dubchak I."/>
            <person name="Furey T.S."/>
            <person name="DeJong P."/>
            <person name="Dickson M."/>
            <person name="Gordon D."/>
            <person name="Eichler E.E."/>
            <person name="Pennacchio L.A."/>
            <person name="Richardson P."/>
            <person name="Stubbs L."/>
            <person name="Rokhsar D.S."/>
            <person name="Myers R.M."/>
            <person name="Rubin E.M."/>
            <person name="Lucas S.M."/>
        </authorList>
    </citation>
    <scope>NUCLEOTIDE SEQUENCE [LARGE SCALE GENOMIC DNA]</scope>
</reference>
<reference key="3">
    <citation type="submission" date="2005-07" db="EMBL/GenBank/DDBJ databases">
        <authorList>
            <person name="Mural R.J."/>
            <person name="Istrail S."/>
            <person name="Sutton G.G."/>
            <person name="Florea L."/>
            <person name="Halpern A.L."/>
            <person name="Mobarry C.M."/>
            <person name="Lippert R."/>
            <person name="Walenz B."/>
            <person name="Shatkay H."/>
            <person name="Dew I."/>
            <person name="Miller J.R."/>
            <person name="Flanigan M.J."/>
            <person name="Edwards N.J."/>
            <person name="Bolanos R."/>
            <person name="Fasulo D."/>
            <person name="Halldorsson B.V."/>
            <person name="Hannenhalli S."/>
            <person name="Turner R."/>
            <person name="Yooseph S."/>
            <person name="Lu F."/>
            <person name="Nusskern D.R."/>
            <person name="Shue B.C."/>
            <person name="Zheng X.H."/>
            <person name="Zhong F."/>
            <person name="Delcher A.L."/>
            <person name="Huson D.H."/>
            <person name="Kravitz S.A."/>
            <person name="Mouchard L."/>
            <person name="Reinert K."/>
            <person name="Remington K.A."/>
            <person name="Clark A.G."/>
            <person name="Waterman M.S."/>
            <person name="Eichler E.E."/>
            <person name="Adams M.D."/>
            <person name="Hunkapiller M.W."/>
            <person name="Myers E.W."/>
            <person name="Venter J.C."/>
        </authorList>
    </citation>
    <scope>NUCLEOTIDE SEQUENCE [LARGE SCALE GENOMIC DNA]</scope>
</reference>
<evidence type="ECO:0000255" key="1">
    <source>
        <dbReference type="PROSITE-ProRule" id="PRU00042"/>
    </source>
</evidence>
<evidence type="ECO:0000256" key="2">
    <source>
        <dbReference type="SAM" id="MobiDB-lite"/>
    </source>
</evidence>
<evidence type="ECO:0000269" key="3">
    <source>
    </source>
</evidence>
<evidence type="ECO:0000305" key="4"/>
<organism>
    <name type="scientific">Homo sapiens</name>
    <name type="common">Human</name>
    <dbReference type="NCBI Taxonomy" id="9606"/>
    <lineage>
        <taxon>Eukaryota</taxon>
        <taxon>Metazoa</taxon>
        <taxon>Chordata</taxon>
        <taxon>Craniata</taxon>
        <taxon>Vertebrata</taxon>
        <taxon>Euteleostomi</taxon>
        <taxon>Mammalia</taxon>
        <taxon>Eutheria</taxon>
        <taxon>Euarchontoglires</taxon>
        <taxon>Primates</taxon>
        <taxon>Haplorrhini</taxon>
        <taxon>Catarrhini</taxon>
        <taxon>Hominidae</taxon>
        <taxon>Homo</taxon>
    </lineage>
</organism>
<feature type="chain" id="PRO_0000319111" description="Zinc finger protein 835">
    <location>
        <begin position="1"/>
        <end position="537"/>
    </location>
</feature>
<feature type="zinc finger region" description="C2H2-type 1" evidence="1">
    <location>
        <begin position="110"/>
        <end position="132"/>
    </location>
</feature>
<feature type="zinc finger region" description="C2H2-type 2" evidence="1">
    <location>
        <begin position="138"/>
        <end position="160"/>
    </location>
</feature>
<feature type="zinc finger region" description="C2H2-type 3" evidence="1">
    <location>
        <begin position="166"/>
        <end position="188"/>
    </location>
</feature>
<feature type="zinc finger region" description="C2H2-type 4" evidence="1">
    <location>
        <begin position="194"/>
        <end position="216"/>
    </location>
</feature>
<feature type="zinc finger region" description="C2H2-type 5" evidence="1">
    <location>
        <begin position="222"/>
        <end position="244"/>
    </location>
</feature>
<feature type="zinc finger region" description="C2H2-type 6" evidence="1">
    <location>
        <begin position="250"/>
        <end position="272"/>
    </location>
</feature>
<feature type="zinc finger region" description="C2H2-type 7" evidence="1">
    <location>
        <begin position="278"/>
        <end position="300"/>
    </location>
</feature>
<feature type="zinc finger region" description="C2H2-type 8" evidence="1">
    <location>
        <begin position="306"/>
        <end position="328"/>
    </location>
</feature>
<feature type="zinc finger region" description="C2H2-type 9" evidence="1">
    <location>
        <begin position="334"/>
        <end position="356"/>
    </location>
</feature>
<feature type="zinc finger region" description="C2H2-type 10" evidence="1">
    <location>
        <begin position="362"/>
        <end position="384"/>
    </location>
</feature>
<feature type="zinc finger region" description="C2H2-type 11" evidence="1">
    <location>
        <begin position="390"/>
        <end position="412"/>
    </location>
</feature>
<feature type="zinc finger region" description="C2H2-type 12" evidence="1">
    <location>
        <begin position="418"/>
        <end position="440"/>
    </location>
</feature>
<feature type="zinc finger region" description="C2H2-type 13" evidence="1">
    <location>
        <begin position="446"/>
        <end position="468"/>
    </location>
</feature>
<feature type="zinc finger region" description="C2H2-type 14" evidence="1">
    <location>
        <begin position="474"/>
        <end position="496"/>
    </location>
</feature>
<feature type="region of interest" description="Disordered" evidence="2">
    <location>
        <begin position="12"/>
        <end position="109"/>
    </location>
</feature>
<feature type="region of interest" description="Disordered" evidence="2">
    <location>
        <begin position="497"/>
        <end position="537"/>
    </location>
</feature>
<feature type="compositionally biased region" description="Polar residues" evidence="2">
    <location>
        <begin position="63"/>
        <end position="77"/>
    </location>
</feature>
<feature type="compositionally biased region" description="Basic and acidic residues" evidence="2">
    <location>
        <begin position="89"/>
        <end position="104"/>
    </location>
</feature>
<feature type="compositionally biased region" description="Polar residues" evidence="2">
    <location>
        <begin position="509"/>
        <end position="524"/>
    </location>
</feature>
<feature type="sequence variant" id="VAR_061977" description="In dbSNP:rs12462469." evidence="3">
    <original>E</original>
    <variation>K</variation>
    <location>
        <position position="29"/>
    </location>
</feature>
<feature type="sequence variant" id="VAR_061978" description="In dbSNP:rs12460400." evidence="3">
    <original>E</original>
    <variation>A</variation>
    <location>
        <position position="88"/>
    </location>
</feature>
<feature type="sequence conflict" description="In Ref. 1; BAH13066." evidence="4" ref="1">
    <original>H</original>
    <variation>R</variation>
    <location>
        <position position="156"/>
    </location>
</feature>
<keyword id="KW-0238">DNA-binding</keyword>
<keyword id="KW-0479">Metal-binding</keyword>
<keyword id="KW-0539">Nucleus</keyword>
<keyword id="KW-1267">Proteomics identification</keyword>
<keyword id="KW-1185">Reference proteome</keyword>
<keyword id="KW-0677">Repeat</keyword>
<keyword id="KW-0804">Transcription</keyword>
<keyword id="KW-0805">Transcription regulation</keyword>
<keyword id="KW-0862">Zinc</keyword>
<keyword id="KW-0863">Zinc-finger</keyword>
<dbReference type="EMBL" id="AK023017">
    <property type="status" value="NOT_ANNOTATED_CDS"/>
    <property type="molecule type" value="mRNA"/>
</dbReference>
<dbReference type="EMBL" id="AK299565">
    <property type="protein sequence ID" value="BAH13066.1"/>
    <property type="molecule type" value="mRNA"/>
</dbReference>
<dbReference type="EMBL" id="AC007228">
    <property type="protein sequence ID" value="AAD23609.1"/>
    <property type="status" value="ALT_SEQ"/>
    <property type="molecule type" value="Genomic_DNA"/>
</dbReference>
<dbReference type="EMBL" id="CH471135">
    <property type="protein sequence ID" value="EAW72470.1"/>
    <property type="molecule type" value="Genomic_DNA"/>
</dbReference>
<dbReference type="CCDS" id="CCDS56105.1"/>
<dbReference type="RefSeq" id="NP_001005850.2">
    <property type="nucleotide sequence ID" value="NM_001005850.3"/>
</dbReference>
<dbReference type="RefSeq" id="XP_005259439.1">
    <property type="nucleotide sequence ID" value="XM_005259382.3"/>
</dbReference>
<dbReference type="RefSeq" id="XP_005259440.1">
    <property type="nucleotide sequence ID" value="XM_005259383.4"/>
</dbReference>
<dbReference type="SMR" id="Q9Y2P0"/>
<dbReference type="BioGRID" id="124722">
    <property type="interactions" value="68"/>
</dbReference>
<dbReference type="FunCoup" id="Q9Y2P0">
    <property type="interactions" value="3"/>
</dbReference>
<dbReference type="IntAct" id="Q9Y2P0">
    <property type="interactions" value="67"/>
</dbReference>
<dbReference type="STRING" id="9606.ENSP00000444747"/>
<dbReference type="GlyGen" id="Q9Y2P0">
    <property type="glycosylation" value="2 sites"/>
</dbReference>
<dbReference type="iPTMnet" id="Q9Y2P0"/>
<dbReference type="PhosphoSitePlus" id="Q9Y2P0"/>
<dbReference type="BioMuta" id="ZNF835"/>
<dbReference type="DMDM" id="403314387"/>
<dbReference type="jPOST" id="Q9Y2P0"/>
<dbReference type="MassIVE" id="Q9Y2P0"/>
<dbReference type="PaxDb" id="9606-ENSP00000444747"/>
<dbReference type="PeptideAtlas" id="Q9Y2P0"/>
<dbReference type="ProteomicsDB" id="32421"/>
<dbReference type="ProteomicsDB" id="85852"/>
<dbReference type="Antibodypedia" id="33227">
    <property type="antibodies" value="104 antibodies from 16 providers"/>
</dbReference>
<dbReference type="DNASU" id="90485"/>
<dbReference type="Ensembl" id="ENST00000537055.4">
    <property type="protein sequence ID" value="ENSP00000444747.1"/>
    <property type="gene ID" value="ENSG00000127903.14"/>
</dbReference>
<dbReference type="GeneID" id="90485"/>
<dbReference type="KEGG" id="hsa:90485"/>
<dbReference type="MANE-Select" id="ENST00000537055.4">
    <property type="protein sequence ID" value="ENSP00000444747.1"/>
    <property type="RefSeq nucleotide sequence ID" value="NM_001005850.3"/>
    <property type="RefSeq protein sequence ID" value="NP_001005850.2"/>
</dbReference>
<dbReference type="UCSC" id="uc010ygn.3">
    <property type="organism name" value="human"/>
</dbReference>
<dbReference type="AGR" id="HGNC:34332"/>
<dbReference type="CTD" id="90485"/>
<dbReference type="GeneCards" id="ZNF835"/>
<dbReference type="HGNC" id="HGNC:34332">
    <property type="gene designation" value="ZNF835"/>
</dbReference>
<dbReference type="HPA" id="ENSG00000127903">
    <property type="expression patterns" value="Low tissue specificity"/>
</dbReference>
<dbReference type="neXtProt" id="NX_Q9Y2P0"/>
<dbReference type="OpenTargets" id="ENSG00000127903"/>
<dbReference type="PharmGKB" id="PA162410787"/>
<dbReference type="VEuPathDB" id="HostDB:ENSG00000127903"/>
<dbReference type="eggNOG" id="KOG1721">
    <property type="taxonomic scope" value="Eukaryota"/>
</dbReference>
<dbReference type="GeneTree" id="ENSGT00940000165608"/>
<dbReference type="HOGENOM" id="CLU_002678_44_17_1"/>
<dbReference type="InParanoid" id="Q9Y2P0"/>
<dbReference type="OMA" id="PKKPWKC"/>
<dbReference type="OrthoDB" id="654211at2759"/>
<dbReference type="PAN-GO" id="Q9Y2P0">
    <property type="GO annotations" value="3 GO annotations based on evolutionary models"/>
</dbReference>
<dbReference type="PhylomeDB" id="Q9Y2P0"/>
<dbReference type="TreeFam" id="TF341817"/>
<dbReference type="PathwayCommons" id="Q9Y2P0"/>
<dbReference type="SignaLink" id="Q9Y2P0"/>
<dbReference type="BioGRID-ORCS" id="90485">
    <property type="hits" value="14 hits in 1144 CRISPR screens"/>
</dbReference>
<dbReference type="ChiTaRS" id="ZNF835">
    <property type="organism name" value="human"/>
</dbReference>
<dbReference type="GenomeRNAi" id="90485"/>
<dbReference type="Pharos" id="Q9Y2P0">
    <property type="development level" value="Tdark"/>
</dbReference>
<dbReference type="PRO" id="PR:Q9Y2P0"/>
<dbReference type="Proteomes" id="UP000005640">
    <property type="component" value="Chromosome 19"/>
</dbReference>
<dbReference type="RNAct" id="Q9Y2P0">
    <property type="molecule type" value="protein"/>
</dbReference>
<dbReference type="Bgee" id="ENSG00000127903">
    <property type="expression patterns" value="Expressed in buccal mucosa cell and 107 other cell types or tissues"/>
</dbReference>
<dbReference type="ExpressionAtlas" id="Q9Y2P0">
    <property type="expression patterns" value="baseline and differential"/>
</dbReference>
<dbReference type="GO" id="GO:0005634">
    <property type="term" value="C:nucleus"/>
    <property type="evidence" value="ECO:0007669"/>
    <property type="project" value="UniProtKB-SubCell"/>
</dbReference>
<dbReference type="GO" id="GO:0003700">
    <property type="term" value="F:DNA-binding transcription factor activity"/>
    <property type="evidence" value="ECO:0000318"/>
    <property type="project" value="GO_Central"/>
</dbReference>
<dbReference type="GO" id="GO:0000978">
    <property type="term" value="F:RNA polymerase II cis-regulatory region sequence-specific DNA binding"/>
    <property type="evidence" value="ECO:0000318"/>
    <property type="project" value="GO_Central"/>
</dbReference>
<dbReference type="GO" id="GO:0008270">
    <property type="term" value="F:zinc ion binding"/>
    <property type="evidence" value="ECO:0007669"/>
    <property type="project" value="UniProtKB-KW"/>
</dbReference>
<dbReference type="GO" id="GO:0006357">
    <property type="term" value="P:regulation of transcription by RNA polymerase II"/>
    <property type="evidence" value="ECO:0000318"/>
    <property type="project" value="GO_Central"/>
</dbReference>
<dbReference type="FunFam" id="3.30.160.60:FF:002063">
    <property type="entry name" value="RB associated KRAB zinc finger"/>
    <property type="match status" value="1"/>
</dbReference>
<dbReference type="FunFam" id="3.30.160.60:FF:000295">
    <property type="entry name" value="zinc finger protein 19"/>
    <property type="match status" value="1"/>
</dbReference>
<dbReference type="FunFam" id="3.30.160.60:FF:000380">
    <property type="entry name" value="zinc finger protein 2 isoform X2"/>
    <property type="match status" value="1"/>
</dbReference>
<dbReference type="FunFam" id="3.30.160.60:FF:000352">
    <property type="entry name" value="zinc finger protein 3 homolog"/>
    <property type="match status" value="1"/>
</dbReference>
<dbReference type="FunFam" id="3.30.160.60:FF:002343">
    <property type="entry name" value="Zinc finger protein 33A"/>
    <property type="match status" value="1"/>
</dbReference>
<dbReference type="FunFam" id="3.30.160.60:FF:000016">
    <property type="entry name" value="zinc finger protein 37 homolog"/>
    <property type="match status" value="2"/>
</dbReference>
<dbReference type="FunFam" id="3.30.160.60:FF:002090">
    <property type="entry name" value="Zinc finger protein 473"/>
    <property type="match status" value="1"/>
</dbReference>
<dbReference type="FunFam" id="3.30.160.60:FF:002254">
    <property type="entry name" value="Zinc finger protein 540"/>
    <property type="match status" value="1"/>
</dbReference>
<dbReference type="FunFam" id="3.30.160.60:FF:001270">
    <property type="entry name" value="zinc finger protein 583 isoform X1"/>
    <property type="match status" value="1"/>
</dbReference>
<dbReference type="FunFam" id="3.30.160.60:FF:001509">
    <property type="entry name" value="Zinc finger protein 616"/>
    <property type="match status" value="1"/>
</dbReference>
<dbReference type="FunFam" id="3.30.160.60:FF:000862">
    <property type="entry name" value="zinc finger protein 697"/>
    <property type="match status" value="1"/>
</dbReference>
<dbReference type="FunFam" id="3.30.160.60:FF:002014">
    <property type="entry name" value="Zinc finger protein 835"/>
    <property type="match status" value="2"/>
</dbReference>
<dbReference type="Gene3D" id="3.30.160.60">
    <property type="entry name" value="Classic Zinc Finger"/>
    <property type="match status" value="14"/>
</dbReference>
<dbReference type="InterPro" id="IPR036236">
    <property type="entry name" value="Znf_C2H2_sf"/>
</dbReference>
<dbReference type="InterPro" id="IPR013087">
    <property type="entry name" value="Znf_C2H2_type"/>
</dbReference>
<dbReference type="PANTHER" id="PTHR24399">
    <property type="entry name" value="ZINC FINGER AND BTB DOMAIN-CONTAINING"/>
    <property type="match status" value="1"/>
</dbReference>
<dbReference type="PANTHER" id="PTHR24399:SF68">
    <property type="entry name" value="ZINC FINGER PROTEIN 358-RELATED"/>
    <property type="match status" value="1"/>
</dbReference>
<dbReference type="Pfam" id="PF00096">
    <property type="entry name" value="zf-C2H2"/>
    <property type="match status" value="14"/>
</dbReference>
<dbReference type="SMART" id="SM00355">
    <property type="entry name" value="ZnF_C2H2"/>
    <property type="match status" value="14"/>
</dbReference>
<dbReference type="SUPFAM" id="SSF57667">
    <property type="entry name" value="beta-beta-alpha zinc fingers"/>
    <property type="match status" value="9"/>
</dbReference>
<dbReference type="PROSITE" id="PS00028">
    <property type="entry name" value="ZINC_FINGER_C2H2_1"/>
    <property type="match status" value="14"/>
</dbReference>
<dbReference type="PROSITE" id="PS50157">
    <property type="entry name" value="ZINC_FINGER_C2H2_2"/>
    <property type="match status" value="14"/>
</dbReference>
<accession>Q9Y2P0</accession>
<accession>B7Z5Y0</accession>
<accession>G3V1S0</accession>
<protein>
    <recommendedName>
        <fullName>Zinc finger protein 835</fullName>
    </recommendedName>
</protein>
<gene>
    <name type="primary">ZNF835</name>
</gene>
<comment type="function">
    <text>May be involved in transcriptional regulation.</text>
</comment>
<comment type="interaction">
    <interactant intactId="EBI-5667516">
        <id>Q9Y2P0</id>
    </interactant>
    <interactant intactId="EBI-742722">
        <id>Q9BUH8</id>
        <label>BEGAIN</label>
    </interactant>
    <organismsDiffer>false</organismsDiffer>
    <experiments>3</experiments>
</comment>
<comment type="interaction">
    <interactant intactId="EBI-5667516">
        <id>Q9Y2P0</id>
    </interactant>
    <interactant intactId="EBI-358049">
        <id>Q13895</id>
        <label>BYSL</label>
    </interactant>
    <organismsDiffer>false</organismsDiffer>
    <experiments>3</experiments>
</comment>
<comment type="interaction">
    <interactant intactId="EBI-5667516">
        <id>Q9Y2P0</id>
    </interactant>
    <interactant intactId="EBI-10311131">
        <id>Q9NP86</id>
        <label>CABP5</label>
    </interactant>
    <organismsDiffer>false</organismsDiffer>
    <experiments>3</experiments>
</comment>
<comment type="interaction">
    <interactant intactId="EBI-5667516">
        <id>Q9Y2P0</id>
    </interactant>
    <interactant intactId="EBI-10961624">
        <id>Q2TAC2-2</id>
        <label>CCDC57</label>
    </interactant>
    <organismsDiffer>false</organismsDiffer>
    <experiments>3</experiments>
</comment>
<comment type="interaction">
    <interactant intactId="EBI-5667516">
        <id>Q9Y2P0</id>
    </interactant>
    <interactant intactId="EBI-1045350">
        <id>Q16204</id>
        <label>CCDC6</label>
    </interactant>
    <organismsDiffer>false</organismsDiffer>
    <experiments>3</experiments>
</comment>
<comment type="interaction">
    <interactant intactId="EBI-5667516">
        <id>Q9Y2P0</id>
    </interactant>
    <interactant intactId="EBI-748961">
        <id>O95273</id>
        <label>CCNDBP1</label>
    </interactant>
    <organismsDiffer>false</organismsDiffer>
    <experiments>3</experiments>
</comment>
<comment type="interaction">
    <interactant intactId="EBI-5667516">
        <id>Q9Y2P0</id>
    </interactant>
    <interactant intactId="EBI-11063830">
        <id>Q86X02</id>
        <label>CDR2L</label>
    </interactant>
    <organismsDiffer>false</organismsDiffer>
    <experiments>3</experiments>
</comment>
<comment type="interaction">
    <interactant intactId="EBI-5667516">
        <id>Q9Y2P0</id>
    </interactant>
    <interactant intactId="EBI-739624">
        <id>Q8NHQ1</id>
        <label>CEP70</label>
    </interactant>
    <organismsDiffer>false</organismsDiffer>
    <experiments>3</experiments>
</comment>
<comment type="interaction">
    <interactant intactId="EBI-5667516">
        <id>Q9Y2P0</id>
    </interactant>
    <interactant intactId="EBI-10292696">
        <id>Q96Q77</id>
        <label>CIB3</label>
    </interactant>
    <organismsDiffer>false</organismsDiffer>
    <experiments>3</experiments>
</comment>
<comment type="interaction">
    <interactant intactId="EBI-5667516">
        <id>Q9Y2P0</id>
    </interactant>
    <interactant intactId="EBI-745579">
        <id>P49761</id>
        <label>CLK3</label>
    </interactant>
    <organismsDiffer>false</organismsDiffer>
    <experiments>5</experiments>
</comment>
<comment type="interaction">
    <interactant intactId="EBI-5667516">
        <id>Q9Y2P0</id>
    </interactant>
    <interactant intactId="EBI-3867333">
        <id>A8MQ03</id>
        <label>CYSRT1</label>
    </interactant>
    <organismsDiffer>false</organismsDiffer>
    <experiments>3</experiments>
</comment>
<comment type="interaction">
    <interactant intactId="EBI-5667516">
        <id>Q9Y2P0</id>
    </interactant>
    <interactant intactId="EBI-748597">
        <id>Q05D60</id>
        <label>DEUP1</label>
    </interactant>
    <organismsDiffer>false</organismsDiffer>
    <experiments>3</experiments>
</comment>
<comment type="interaction">
    <interactant intactId="EBI-5667516">
        <id>Q9Y2P0</id>
    </interactant>
    <interactant intactId="EBI-5661036">
        <id>A1L4K1</id>
        <label>FSD2</label>
    </interactant>
    <organismsDiffer>false</organismsDiffer>
    <experiments>3</experiments>
</comment>
<comment type="interaction">
    <interactant intactId="EBI-5667516">
        <id>Q9Y2P0</id>
    </interactant>
    <interactant intactId="EBI-618309">
        <id>Q08379</id>
        <label>GOLGA2</label>
    </interactant>
    <organismsDiffer>false</organismsDiffer>
    <experiments>3</experiments>
</comment>
<comment type="interaction">
    <interactant intactId="EBI-5667516">
        <id>Q9Y2P0</id>
    </interactant>
    <interactant intactId="EBI-5916454">
        <id>A6NEM1</id>
        <label>GOLGA6L9</label>
    </interactant>
    <organismsDiffer>false</organismsDiffer>
    <experiments>3</experiments>
</comment>
<comment type="interaction">
    <interactant intactId="EBI-5667516">
        <id>Q9Y2P0</id>
    </interactant>
    <interactant intactId="EBI-11102276">
        <id>Q9HD26-2</id>
        <label>GOPC</label>
    </interactant>
    <organismsDiffer>false</organismsDiffer>
    <experiments>3</experiments>
</comment>
<comment type="interaction">
    <interactant intactId="EBI-5667516">
        <id>Q9Y2P0</id>
    </interactant>
    <interactant intactId="EBI-717919">
        <id>Q4V328</id>
        <label>GRIPAP1</label>
    </interactant>
    <organismsDiffer>false</organismsDiffer>
    <experiments>3</experiments>
</comment>
<comment type="interaction">
    <interactant intactId="EBI-5667516">
        <id>Q9Y2P0</id>
    </interactant>
    <interactant intactId="EBI-11978177">
        <id>Q96NT3-2</id>
        <label>GUCD1</label>
    </interactant>
    <organismsDiffer>false</organismsDiffer>
    <experiments>3</experiments>
</comment>
<comment type="interaction">
    <interactant intactId="EBI-5667516">
        <id>Q9Y2P0</id>
    </interactant>
    <interactant intactId="EBI-712814">
        <id>P54257</id>
        <label>HAP1</label>
    </interactant>
    <organismsDiffer>false</organismsDiffer>
    <experiments>3</experiments>
</comment>
<comment type="interaction">
    <interactant intactId="EBI-5667516">
        <id>Q9Y2P0</id>
    </interactant>
    <interactant intactId="EBI-10961706">
        <id>Q96ED9-2</id>
        <label>HOOK2</label>
    </interactant>
    <organismsDiffer>false</organismsDiffer>
    <experiments>3</experiments>
</comment>
<comment type="interaction">
    <interactant intactId="EBI-5667516">
        <id>Q9Y2P0</id>
    </interactant>
    <interactant intactId="EBI-17494170">
        <id>Q4VB01</id>
        <label>HOXB1</label>
    </interactant>
    <organismsDiffer>false</organismsDiffer>
    <experiments>3</experiments>
</comment>
<comment type="interaction">
    <interactant intactId="EBI-5667516">
        <id>Q9Y2P0</id>
    </interactant>
    <interactant intactId="EBI-7116203">
        <id>O75031</id>
        <label>HSF2BP</label>
    </interactant>
    <organismsDiffer>false</organismsDiffer>
    <experiments>3</experiments>
</comment>
<comment type="interaction">
    <interactant intactId="EBI-5667516">
        <id>Q9Y2P0</id>
    </interactant>
    <interactant intactId="EBI-81279">
        <id>Q9Y6K9</id>
        <label>IKBKG</label>
    </interactant>
    <organismsDiffer>false</organismsDiffer>
    <experiments>3</experiments>
</comment>
<comment type="interaction">
    <interactant intactId="EBI-5667516">
        <id>Q9Y2P0</id>
    </interactant>
    <interactant intactId="EBI-17178971">
        <id>Q14005-2</id>
        <label>IL16</label>
    </interactant>
    <organismsDiffer>false</organismsDiffer>
    <experiments>3</experiments>
</comment>
<comment type="interaction">
    <interactant intactId="EBI-5667516">
        <id>Q9Y2P0</id>
    </interactant>
    <interactant intactId="EBI-14069005">
        <id>Q9BVG8-5</id>
        <label>KIFC3</label>
    </interactant>
    <organismsDiffer>false</organismsDiffer>
    <experiments>3</experiments>
</comment>
<comment type="interaction">
    <interactant intactId="EBI-5667516">
        <id>Q9Y2P0</id>
    </interactant>
    <interactant intactId="EBI-948001">
        <id>Q15323</id>
        <label>KRT31</label>
    </interactant>
    <organismsDiffer>false</organismsDiffer>
    <experiments>3</experiments>
</comment>
<comment type="interaction">
    <interactant intactId="EBI-5667516">
        <id>Q9Y2P0</id>
    </interactant>
    <interactant intactId="EBI-11953334">
        <id>P60328</id>
        <label>KRTAP12-3</label>
    </interactant>
    <organismsDiffer>false</organismsDiffer>
    <experiments>3</experiments>
</comment>
<comment type="interaction">
    <interactant intactId="EBI-5667516">
        <id>Q9Y2P0</id>
    </interactant>
    <interactant intactId="EBI-11993254">
        <id>Q9BYR2</id>
        <label>KRTAP4-5</label>
    </interactant>
    <organismsDiffer>false</organismsDiffer>
    <experiments>3</experiments>
</comment>
<comment type="interaction">
    <interactant intactId="EBI-5667516">
        <id>Q9Y2P0</id>
    </interactant>
    <interactant intactId="EBI-740738">
        <id>O95751</id>
        <label>LDOC1</label>
    </interactant>
    <organismsDiffer>false</organismsDiffer>
    <experiments>3</experiments>
</comment>
<comment type="interaction">
    <interactant intactId="EBI-5667516">
        <id>Q9Y2P0</id>
    </interactant>
    <interactant intactId="EBI-746778">
        <id>Q96A72</id>
        <label>MAGOHB</label>
    </interactant>
    <organismsDiffer>false</organismsDiffer>
    <experiments>3</experiments>
</comment>
<comment type="interaction">
    <interactant intactId="EBI-5667516">
        <id>Q9Y2P0</id>
    </interactant>
    <interactant intactId="EBI-2340269">
        <id>Q13064</id>
        <label>MKRN3</label>
    </interactant>
    <organismsDiffer>false</organismsDiffer>
    <experiments>3</experiments>
</comment>
<comment type="interaction">
    <interactant intactId="EBI-5667516">
        <id>Q9Y2P0</id>
    </interactant>
    <interactant intactId="EBI-17491620">
        <id>P13349</id>
        <label>MYF5</label>
    </interactant>
    <organismsDiffer>false</organismsDiffer>
    <experiments>3</experiments>
</comment>
<comment type="interaction">
    <interactant intactId="EBI-5667516">
        <id>Q9Y2P0</id>
    </interactant>
    <interactant intactId="EBI-1051317">
        <id>Q9H4L5</id>
        <label>OSBPL3</label>
    </interactant>
    <organismsDiffer>false</organismsDiffer>
    <experiments>3</experiments>
</comment>
<comment type="interaction">
    <interactant intactId="EBI-5667516">
        <id>Q9Y2P0</id>
    </interactant>
    <interactant intactId="EBI-1055079">
        <id>O15160</id>
        <label>POLR1C</label>
    </interactant>
    <organismsDiffer>false</organismsDiffer>
    <experiments>3</experiments>
</comment>
<comment type="interaction">
    <interactant intactId="EBI-5667516">
        <id>Q9Y2P0</id>
    </interactant>
    <interactant intactId="EBI-3957793">
        <id>Q9GZV8</id>
        <label>PRDM14</label>
    </interactant>
    <organismsDiffer>false</organismsDiffer>
    <experiments>3</experiments>
</comment>
<comment type="interaction">
    <interactant intactId="EBI-5667516">
        <id>Q9Y2P0</id>
    </interactant>
    <interactant intactId="EBI-726876">
        <id>Q6NUQ1</id>
        <label>RINT1</label>
    </interactant>
    <organismsDiffer>false</organismsDiffer>
    <experiments>3</experiments>
</comment>
<comment type="interaction">
    <interactant intactId="EBI-5667516">
        <id>Q9Y2P0</id>
    </interactant>
    <interactant intactId="EBI-6868977">
        <id>Q5TA31</id>
        <label>RNF187</label>
    </interactant>
    <organismsDiffer>false</organismsDiffer>
    <experiments>3</experiments>
</comment>
<comment type="interaction">
    <interactant intactId="EBI-5667516">
        <id>Q9Y2P0</id>
    </interactant>
    <interactant intactId="EBI-11957366">
        <id>Q59EK9-3</id>
        <label>RUNDC3A</label>
    </interactant>
    <organismsDiffer>false</organismsDiffer>
    <experiments>3</experiments>
</comment>
<comment type="interaction">
    <interactant intactId="EBI-5667516">
        <id>Q9Y2P0</id>
    </interactant>
    <interactant intactId="EBI-10818532">
        <id>Q9BZQ2</id>
        <label>SHCBP1L</label>
    </interactant>
    <organismsDiffer>false</organismsDiffer>
    <experiments>3</experiments>
</comment>
<comment type="interaction">
    <interactant intactId="EBI-5667516">
        <id>Q9Y2P0</id>
    </interactant>
    <interactant intactId="EBI-11955083">
        <id>Q9NUL5-4</id>
        <label>SHFL</label>
    </interactant>
    <organismsDiffer>false</organismsDiffer>
    <experiments>3</experiments>
</comment>
<comment type="interaction">
    <interactant intactId="EBI-5667516">
        <id>Q9Y2P0</id>
    </interactant>
    <interactant intactId="EBI-744066">
        <id>Q9UM82</id>
        <label>SPATA2</label>
    </interactant>
    <organismsDiffer>false</organismsDiffer>
    <experiments>3</experiments>
</comment>
<comment type="interaction">
    <interactant intactId="EBI-5667516">
        <id>Q9Y2P0</id>
    </interactant>
    <interactant intactId="EBI-745021">
        <id>Q96FJ0</id>
        <label>STAMBPL1</label>
    </interactant>
    <organismsDiffer>false</organismsDiffer>
    <experiments>3</experiments>
</comment>
<comment type="interaction">
    <interactant intactId="EBI-5667516">
        <id>Q9Y2P0</id>
    </interactant>
    <interactant intactId="EBI-712466">
        <id>Q16623</id>
        <label>STX1A</label>
    </interactant>
    <organismsDiffer>false</organismsDiffer>
    <experiments>3</experiments>
</comment>
<comment type="interaction">
    <interactant intactId="EBI-5667516">
        <id>Q9Y2P0</id>
    </interactant>
    <interactant intactId="EBI-12090309">
        <id>Q9BXU0</id>
        <label>TEX12</label>
    </interactant>
    <organismsDiffer>false</organismsDiffer>
    <experiments>3</experiments>
</comment>
<comment type="interaction">
    <interactant intactId="EBI-5667516">
        <id>Q9Y2P0</id>
    </interactant>
    <interactant intactId="EBI-11741437">
        <id>Q08117-2</id>
        <label>TLE5</label>
    </interactant>
    <organismsDiffer>false</organismsDiffer>
    <experiments>3</experiments>
</comment>
<comment type="interaction">
    <interactant intactId="EBI-5667516">
        <id>Q9Y2P0</id>
    </interactant>
    <interactant intactId="EBI-3650647">
        <id>Q9BUZ4</id>
        <label>TRAF4</label>
    </interactant>
    <organismsDiffer>false</organismsDiffer>
    <experiments>3</experiments>
</comment>
<comment type="interaction">
    <interactant intactId="EBI-5667516">
        <id>Q9Y2P0</id>
    </interactant>
    <interactant intactId="EBI-740098">
        <id>P36406</id>
        <label>TRIM23</label>
    </interactant>
    <organismsDiffer>false</organismsDiffer>
    <experiments>3</experiments>
</comment>
<comment type="interaction">
    <interactant intactId="EBI-5667516">
        <id>Q9Y2P0</id>
    </interactant>
    <interactant intactId="EBI-725997">
        <id>Q8WV44</id>
        <label>TRIM41</label>
    </interactant>
    <organismsDiffer>false</organismsDiffer>
    <experiments>6</experiments>
</comment>
<comment type="interaction">
    <interactant intactId="EBI-5667516">
        <id>Q9Y2P0</id>
    </interactant>
    <interactant intactId="EBI-947459">
        <id>Q9H2G4</id>
        <label>TSPYL2</label>
    </interactant>
    <organismsDiffer>false</organismsDiffer>
    <experiments>3</experiments>
</comment>
<comment type="interaction">
    <interactant intactId="EBI-5667516">
        <id>Q9Y2P0</id>
    </interactant>
    <interactant intactId="EBI-7877438">
        <id>P42681</id>
        <label>TXK</label>
    </interactant>
    <organismsDiffer>false</organismsDiffer>
    <experiments>3</experiments>
</comment>
<comment type="interaction">
    <interactant intactId="EBI-5667516">
        <id>Q9Y2P0</id>
    </interactant>
    <interactant intactId="EBI-11097439">
        <id>P26368-2</id>
        <label>U2AF2</label>
    </interactant>
    <organismsDiffer>false</organismsDiffer>
    <experiments>3</experiments>
</comment>
<comment type="interaction">
    <interactant intactId="EBI-5667516">
        <id>Q9Y2P0</id>
    </interactant>
    <interactant intactId="EBI-716093">
        <id>P13994</id>
        <label>YJU2B</label>
    </interactant>
    <organismsDiffer>false</organismsDiffer>
    <experiments>3</experiments>
</comment>
<comment type="interaction">
    <interactant intactId="EBI-5667516">
        <id>Q9Y2P0</id>
    </interactant>
    <interactant intactId="EBI-1228269">
        <id>P58317</id>
        <label>ZNF121</label>
    </interactant>
    <organismsDiffer>false</organismsDiffer>
    <experiments>3</experiments>
</comment>
<comment type="interaction">
    <interactant intactId="EBI-5667516">
        <id>Q9Y2P0</id>
    </interactant>
    <interactant intactId="EBI-751960">
        <id>O95125</id>
        <label>ZNF202</label>
    </interactant>
    <organismsDiffer>false</organismsDiffer>
    <experiments>3</experiments>
</comment>
<comment type="interaction">
    <interactant intactId="EBI-5667516">
        <id>Q9Y2P0</id>
    </interactant>
    <interactant intactId="EBI-10252492">
        <id>Q6P1L6</id>
        <label>ZNF343</label>
    </interactant>
    <organismsDiffer>false</organismsDiffer>
    <experiments>3</experiments>
</comment>
<comment type="interaction">
    <interactant intactId="EBI-5667516">
        <id>Q9Y2P0</id>
    </interactant>
    <interactant intactId="EBI-10486136">
        <id>Q6ZNH5</id>
        <label>ZNF497</label>
    </interactant>
    <organismsDiffer>false</organismsDiffer>
    <experiments>3</experiments>
</comment>
<comment type="interaction">
    <interactant intactId="EBI-5667516">
        <id>Q9Y2P0</id>
    </interactant>
    <interactant intactId="EBI-10283126">
        <id>Q96C55</id>
        <label>ZNF524</label>
    </interactant>
    <organismsDiffer>false</organismsDiffer>
    <experiments>3</experiments>
</comment>
<comment type="interaction">
    <interactant intactId="EBI-5667516">
        <id>Q9Y2P0</id>
    </interactant>
    <interactant intactId="EBI-11035148">
        <id>Q8TF50</id>
        <label>ZNF526</label>
    </interactant>
    <organismsDiffer>false</organismsDiffer>
    <experiments>3</experiments>
</comment>
<comment type="interaction">
    <interactant intactId="EBI-5667516">
        <id>Q9Y2P0</id>
    </interactant>
    <interactant intactId="EBI-2555731">
        <id>Q9H707</id>
        <label>ZNF552</label>
    </interactant>
    <organismsDiffer>false</organismsDiffer>
    <experiments>3</experiments>
</comment>
<comment type="interaction">
    <interactant intactId="EBI-5667516">
        <id>Q9Y2P0</id>
    </interactant>
    <interactant intactId="EBI-10172590">
        <id>Q7Z3I7</id>
        <label>ZNF572</label>
    </interactant>
    <organismsDiffer>false</organismsDiffer>
    <experiments>3</experiments>
</comment>
<comment type="interaction">
    <interactant intactId="EBI-5667516">
        <id>Q9Y2P0</id>
    </interactant>
    <interactant intactId="EBI-9977294">
        <id>Q9UEG4</id>
        <label>ZNF629</label>
    </interactant>
    <organismsDiffer>false</organismsDiffer>
    <experiments>3</experiments>
</comment>
<comment type="interaction">
    <interactant intactId="EBI-5667516">
        <id>Q9Y2P0</id>
    </interactant>
    <interactant intactId="EBI-7138235">
        <id>Q9NQZ8</id>
        <label>ZNF71</label>
    </interactant>
    <organismsDiffer>false</organismsDiffer>
    <experiments>3</experiments>
</comment>
<comment type="interaction">
    <interactant intactId="EBI-5667516">
        <id>Q9Y2P0</id>
    </interactant>
    <interactant intactId="EBI-1210580">
        <id>Q9H5H4</id>
        <label>ZNF768</label>
    </interactant>
    <organismsDiffer>false</organismsDiffer>
    <experiments>3</experiments>
</comment>
<comment type="interaction">
    <interactant intactId="EBI-5667516">
        <id>Q9Y2P0</id>
    </interactant>
    <interactant intactId="EBI-10240849">
        <id>Q3KQV3</id>
        <label>ZNF792</label>
    </interactant>
    <organismsDiffer>false</organismsDiffer>
    <experiments>3</experiments>
</comment>
<comment type="interaction">
    <interactant intactId="EBI-5667516">
        <id>Q9Y2P0</id>
    </interactant>
    <interactant intactId="EBI-11962574">
        <id>Q96EG3</id>
        <label>ZNF837</label>
    </interactant>
    <organismsDiffer>false</organismsDiffer>
    <experiments>3</experiments>
</comment>
<comment type="subcellular location">
    <subcellularLocation>
        <location evidence="4">Nucleus</location>
    </subcellularLocation>
</comment>
<comment type="similarity">
    <text evidence="4">Belongs to the krueppel C2H2-type zinc-finger protein family.</text>
</comment>
<comment type="sequence caution" evidence="4">
    <conflict type="erroneous gene model prediction">
        <sequence resource="EMBL-CDS" id="AAD23609"/>
    </conflict>
</comment>
<name>ZN835_HUMAN</name>
<sequence>MEGLLSVALQGAELEGNWKHEGQVEDLQENQESCPEPEAVACKGDPAGDSMQERDEFSRIPRTISSPAATQASVPDDSSSRRCSAPGESPKERHPDSRQRERGGGPKKPWKCGDCGKAFSYCSAFILHQRIHTGEKPFACPECGKAFSQSVHLTLHQRTHTGEKPYACHECGKAFSQGSYLASHWRTHTGEKPHRCADCGKAFTRVTHLTQHRRVHTGERPYACAQCAKAFRNRSSLIEHQRIHTGEKPYECSACAKAFRFSSALIRHQRIHTEEKPYRCGQCAKAFAQIAHLTQHRRVHTGEKPYTCQDCGALFSQSASLAEHRRIHTGEKPYACGQCAKAFTQVSHLTQHQRTHTGERPYPCHDCGKRFSNRSHLLQHRLVHTGERPYRCLQCGAAFSHVSSLIEHQKIHTGERPYKCGECGKAFSQGSSLALHQRTHTGERPYTCPECGKAFSNRSYLIQHHIVHTGEKPYECSGCGKAFSFSSALIRHQRTHADSSGRLCPAPTPDSTPGLSQGGETCQQGCPGRNPRGPAED</sequence>